<feature type="signal peptide" evidence="1">
    <location>
        <begin position="1"/>
        <end position="21"/>
    </location>
</feature>
<feature type="chain" id="PRO_0000202569" description="Protein PER1">
    <location>
        <begin position="22"/>
        <end position="357"/>
    </location>
</feature>
<feature type="topological domain" description="Lumenal" evidence="1">
    <location>
        <begin position="23"/>
        <end position="113"/>
    </location>
</feature>
<feature type="transmembrane region" description="Helical" evidence="1">
    <location>
        <begin position="114"/>
        <end position="134"/>
    </location>
</feature>
<feature type="topological domain" description="Cytoplasmic" evidence="1">
    <location>
        <begin position="135"/>
        <end position="155"/>
    </location>
</feature>
<feature type="transmembrane region" description="Helical" evidence="1">
    <location>
        <begin position="156"/>
        <end position="176"/>
    </location>
</feature>
<feature type="topological domain" description="Lumenal" evidence="1">
    <location>
        <begin position="177"/>
        <end position="189"/>
    </location>
</feature>
<feature type="transmembrane region" description="Helical" evidence="1">
    <location>
        <begin position="190"/>
        <end position="210"/>
    </location>
</feature>
<feature type="topological domain" description="Cytoplasmic" evidence="1">
    <location>
        <begin position="211"/>
        <end position="212"/>
    </location>
</feature>
<feature type="transmembrane region" description="Helical" evidence="1">
    <location>
        <begin position="213"/>
        <end position="233"/>
    </location>
</feature>
<feature type="topological domain" description="Lumenal" evidence="1">
    <location>
        <begin position="234"/>
        <end position="248"/>
    </location>
</feature>
<feature type="transmembrane region" description="Helical" evidence="1">
    <location>
        <begin position="249"/>
        <end position="269"/>
    </location>
</feature>
<feature type="topological domain" description="Cytoplasmic" evidence="1">
    <location>
        <begin position="270"/>
        <end position="293"/>
    </location>
</feature>
<feature type="transmembrane region" description="Helical" evidence="1">
    <location>
        <begin position="294"/>
        <end position="314"/>
    </location>
</feature>
<feature type="topological domain" description="Lumenal" evidence="1">
    <location>
        <begin position="315"/>
        <end position="324"/>
    </location>
</feature>
<feature type="transmembrane region" description="Helical" evidence="1">
    <location>
        <begin position="325"/>
        <end position="345"/>
    </location>
</feature>
<feature type="topological domain" description="Cytoplasmic" evidence="1">
    <location>
        <begin position="346"/>
        <end position="357"/>
    </location>
</feature>
<protein>
    <recommendedName>
        <fullName>Protein PER1</fullName>
    </recommendedName>
    <alternativeName>
        <fullName>Protein processing in the ER protein 1</fullName>
    </alternativeName>
</protein>
<accession>P25625</accession>
<accession>D6VR53</accession>
<gene>
    <name type="primary">PER1</name>
    <name type="synonym">COS16</name>
    <name type="ordered locus">YCR044C</name>
    <name type="ORF">YCR44C</name>
</gene>
<sequence length="357" mass="42541">MRLAVVVTLLVHCFLVTCSPGDNLDEFIDCTYACEYNRRCPNSQINYIDPETNMFHDIEFFDTPPLYSKLLFWDCISDCDYQCQHIITRWRIDEEEEIYQFHGKWPFLRVLGTQEFFSTIFSIGNFIPHYKGFVKFSRIIREEGDRRRKNSRSILIWNYLYVTVAGMLAWTASSVFHCRDLIITEKLDYFFAGLTVLTGFHAIFARMTSMFLYPKIAQAFTASVAAIFALHILRLYVDWSYTYNMRFNIFFGVLQYILLIMLSCQNYHALQKQKLMGEFKKTAYSSFKRQIFKLCVIPILLVIVTTMAMSLELFDFFSYEWQIDAHALWHLCTIWPSWVLYDFFLEDYAYWGNRQLY</sequence>
<comment type="function">
    <text evidence="4">Involved in the lipid remodeling steps of GPI-anchor maturation. Lipid remodeling steps consist in the generation of 2 saturated fatty chains at the sn-2 position of GPI-anchors proteins. Required for phospholipase A2 activity that removes an acyl-chain at the sn-2 position of GPI-anchors during the remodeling of GPI. Required for efficient transport of GPI-anchor proteins.</text>
</comment>
<comment type="subcellular location">
    <subcellularLocation>
        <location evidence="2 4">Endoplasmic reticulum membrane</location>
        <topology evidence="2 4">Multi-pass membrane protein</topology>
    </subcellularLocation>
</comment>
<comment type="miscellaneous">
    <text evidence="3">Present with 3050 molecules/cell in log phase SD medium.</text>
</comment>
<comment type="similarity">
    <text evidence="5">Belongs to the PGAP3/PER1 family.</text>
</comment>
<organism>
    <name type="scientific">Saccharomyces cerevisiae (strain ATCC 204508 / S288c)</name>
    <name type="common">Baker's yeast</name>
    <dbReference type="NCBI Taxonomy" id="559292"/>
    <lineage>
        <taxon>Eukaryota</taxon>
        <taxon>Fungi</taxon>
        <taxon>Dikarya</taxon>
        <taxon>Ascomycota</taxon>
        <taxon>Saccharomycotina</taxon>
        <taxon>Saccharomycetes</taxon>
        <taxon>Saccharomycetales</taxon>
        <taxon>Saccharomycetaceae</taxon>
        <taxon>Saccharomyces</taxon>
    </lineage>
</organism>
<evidence type="ECO:0000255" key="1"/>
<evidence type="ECO:0000269" key="2">
    <source>
    </source>
</evidence>
<evidence type="ECO:0000269" key="3">
    <source>
    </source>
</evidence>
<evidence type="ECO:0000269" key="4">
    <source>
    </source>
</evidence>
<evidence type="ECO:0000305" key="5"/>
<dbReference type="EMBL" id="X59720">
    <property type="protein sequence ID" value="CAA42292.1"/>
    <property type="molecule type" value="Genomic_DNA"/>
</dbReference>
<dbReference type="EMBL" id="BK006937">
    <property type="protein sequence ID" value="DAA07522.1"/>
    <property type="molecule type" value="Genomic_DNA"/>
</dbReference>
<dbReference type="PIR" id="S19457">
    <property type="entry name" value="S19457"/>
</dbReference>
<dbReference type="RefSeq" id="NP_009973.1">
    <property type="nucleotide sequence ID" value="NM_001178758.1"/>
</dbReference>
<dbReference type="BioGRID" id="31026">
    <property type="interactions" value="362"/>
</dbReference>
<dbReference type="DIP" id="DIP-5598N"/>
<dbReference type="FunCoup" id="P25625">
    <property type="interactions" value="228"/>
</dbReference>
<dbReference type="IntAct" id="P25625">
    <property type="interactions" value="1"/>
</dbReference>
<dbReference type="MINT" id="P25625"/>
<dbReference type="STRING" id="4932.YCR044C"/>
<dbReference type="GlyGen" id="P25625">
    <property type="glycosylation" value="1 site"/>
</dbReference>
<dbReference type="PaxDb" id="4932-YCR044C"/>
<dbReference type="PeptideAtlas" id="P25625"/>
<dbReference type="EnsemblFungi" id="YCR044C_mRNA">
    <property type="protein sequence ID" value="YCR044C"/>
    <property type="gene ID" value="YCR044C"/>
</dbReference>
<dbReference type="GeneID" id="850411"/>
<dbReference type="KEGG" id="sce:YCR044C"/>
<dbReference type="AGR" id="SGD:S000000640"/>
<dbReference type="SGD" id="S000000640">
    <property type="gene designation" value="PER1"/>
</dbReference>
<dbReference type="VEuPathDB" id="FungiDB:YCR044C"/>
<dbReference type="eggNOG" id="KOG2970">
    <property type="taxonomic scope" value="Eukaryota"/>
</dbReference>
<dbReference type="GeneTree" id="ENSGT00390000001304"/>
<dbReference type="HOGENOM" id="CLU_032917_1_1_1"/>
<dbReference type="InParanoid" id="P25625"/>
<dbReference type="OMA" id="DFMIEDC"/>
<dbReference type="OrthoDB" id="419770at2759"/>
<dbReference type="BioCyc" id="YEAST:G3O-29355-MONOMER"/>
<dbReference type="BioGRID-ORCS" id="850411">
    <property type="hits" value="0 hits in 10 CRISPR screens"/>
</dbReference>
<dbReference type="PRO" id="PR:P25625"/>
<dbReference type="Proteomes" id="UP000002311">
    <property type="component" value="Chromosome III"/>
</dbReference>
<dbReference type="RNAct" id="P25625">
    <property type="molecule type" value="protein"/>
</dbReference>
<dbReference type="GO" id="GO:0005783">
    <property type="term" value="C:endoplasmic reticulum"/>
    <property type="evidence" value="ECO:0000314"/>
    <property type="project" value="SGD"/>
</dbReference>
<dbReference type="GO" id="GO:0005789">
    <property type="term" value="C:endoplasmic reticulum membrane"/>
    <property type="evidence" value="ECO:0000318"/>
    <property type="project" value="GO_Central"/>
</dbReference>
<dbReference type="GO" id="GO:0000329">
    <property type="term" value="C:fungal-type vacuole membrane"/>
    <property type="evidence" value="ECO:0000314"/>
    <property type="project" value="SGD"/>
</dbReference>
<dbReference type="GO" id="GO:0016788">
    <property type="term" value="F:hydrolase activity, acting on ester bonds"/>
    <property type="evidence" value="ECO:0000318"/>
    <property type="project" value="GO_Central"/>
</dbReference>
<dbReference type="GO" id="GO:0006506">
    <property type="term" value="P:GPI anchor biosynthetic process"/>
    <property type="evidence" value="ECO:0000315"/>
    <property type="project" value="SGD"/>
</dbReference>
<dbReference type="GO" id="GO:0030026">
    <property type="term" value="P:intracellular manganese ion homeostasis"/>
    <property type="evidence" value="ECO:0000315"/>
    <property type="project" value="SGD"/>
</dbReference>
<dbReference type="InterPro" id="IPR007217">
    <property type="entry name" value="Per1-like"/>
</dbReference>
<dbReference type="PANTHER" id="PTHR13148">
    <property type="entry name" value="PER1-RELATED"/>
    <property type="match status" value="1"/>
</dbReference>
<dbReference type="PANTHER" id="PTHR13148:SF0">
    <property type="entry name" value="POST-GPI ATTACHMENT TO PROTEINS FACTOR 3"/>
    <property type="match status" value="1"/>
</dbReference>
<dbReference type="Pfam" id="PF04080">
    <property type="entry name" value="Per1"/>
    <property type="match status" value="1"/>
</dbReference>
<reference key="1">
    <citation type="journal article" date="1992" name="Nature">
        <title>The complete DNA sequence of yeast chromosome III.</title>
        <authorList>
            <person name="Oliver S.G."/>
            <person name="van der Aart Q.J.M."/>
            <person name="Agostoni-Carbone M.L."/>
            <person name="Aigle M."/>
            <person name="Alberghina L."/>
            <person name="Alexandraki D."/>
            <person name="Antoine G."/>
            <person name="Anwar R."/>
            <person name="Ballesta J.P.G."/>
            <person name="Benit P."/>
            <person name="Berben G."/>
            <person name="Bergantino E."/>
            <person name="Biteau N."/>
            <person name="Bolle P.-A."/>
            <person name="Bolotin-Fukuhara M."/>
            <person name="Brown A."/>
            <person name="Brown A.J.P."/>
            <person name="Buhler J.-M."/>
            <person name="Carcano C."/>
            <person name="Carignani G."/>
            <person name="Cederberg H."/>
            <person name="Chanet R."/>
            <person name="Contreras R."/>
            <person name="Crouzet M."/>
            <person name="Daignan-Fornier B."/>
            <person name="Defoor E."/>
            <person name="Delgado M.D."/>
            <person name="Demolder J."/>
            <person name="Doira C."/>
            <person name="Dubois E."/>
            <person name="Dujon B."/>
            <person name="Duesterhoeft A."/>
            <person name="Erdmann D."/>
            <person name="Esteban M."/>
            <person name="Fabre F."/>
            <person name="Fairhead C."/>
            <person name="Faye G."/>
            <person name="Feldmann H."/>
            <person name="Fiers W."/>
            <person name="Francingues-Gaillard M.-C."/>
            <person name="Franco L."/>
            <person name="Frontali L."/>
            <person name="Fukuhara H."/>
            <person name="Fuller L.J."/>
            <person name="Galland P."/>
            <person name="Gent M.E."/>
            <person name="Gigot D."/>
            <person name="Gilliquet V."/>
            <person name="Glansdorff N."/>
            <person name="Goffeau A."/>
            <person name="Grenson M."/>
            <person name="Grisanti P."/>
            <person name="Grivell L.A."/>
            <person name="de Haan M."/>
            <person name="Haasemann M."/>
            <person name="Hatat D."/>
            <person name="Hoenicka J."/>
            <person name="Hegemann J.H."/>
            <person name="Herbert C.J."/>
            <person name="Hilger F."/>
            <person name="Hohmann S."/>
            <person name="Hollenberg C.P."/>
            <person name="Huse K."/>
            <person name="Iborra F."/>
            <person name="Indge K.J."/>
            <person name="Isono K."/>
            <person name="Jacq C."/>
            <person name="Jacquet M."/>
            <person name="James C.M."/>
            <person name="Jauniaux J.-C."/>
            <person name="Jia Y."/>
            <person name="Jimenez A."/>
            <person name="Kelly A."/>
            <person name="Kleinhans U."/>
            <person name="Kreisl P."/>
            <person name="Lanfranchi G."/>
            <person name="Lewis C."/>
            <person name="van der Linden C.G."/>
            <person name="Lucchini G."/>
            <person name="Lutzenkirchen K."/>
            <person name="Maat M.J."/>
            <person name="Mallet L."/>
            <person name="Mannhaupt G."/>
            <person name="Martegani E."/>
            <person name="Mathieu A."/>
            <person name="Maurer C.T.C."/>
            <person name="McConnell D."/>
            <person name="McKee R.A."/>
            <person name="Messenguy F."/>
            <person name="Mewes H.-W."/>
            <person name="Molemans F."/>
            <person name="Montague M.A."/>
            <person name="Muzi Falconi M."/>
            <person name="Navas L."/>
            <person name="Newlon C.S."/>
            <person name="Noone D."/>
            <person name="Pallier C."/>
            <person name="Panzeri L."/>
            <person name="Pearson B.M."/>
            <person name="Perea J."/>
            <person name="Philippsen P."/>
            <person name="Pierard A."/>
            <person name="Planta R.J."/>
            <person name="Plevani P."/>
            <person name="Poetsch B."/>
            <person name="Pohl F.M."/>
            <person name="Purnelle B."/>
            <person name="Ramezani Rad M."/>
            <person name="Rasmussen S.W."/>
            <person name="Raynal A."/>
            <person name="Remacha M.A."/>
            <person name="Richterich P."/>
            <person name="Roberts A.B."/>
            <person name="Rodriguez F."/>
            <person name="Sanz E."/>
            <person name="Schaaff-Gerstenschlaeger I."/>
            <person name="Scherens B."/>
            <person name="Schweitzer B."/>
            <person name="Shu Y."/>
            <person name="Skala J."/>
            <person name="Slonimski P.P."/>
            <person name="Sor F."/>
            <person name="Soustelle C."/>
            <person name="Spiegelberg R."/>
            <person name="Stateva L.I."/>
            <person name="Steensma H.Y."/>
            <person name="Steiner S."/>
            <person name="Thierry A."/>
            <person name="Thireos G."/>
            <person name="Tzermia M."/>
            <person name="Urrestarazu L.A."/>
            <person name="Valle G."/>
            <person name="Vetter I."/>
            <person name="van Vliet-Reedijk J.C."/>
            <person name="Voet M."/>
            <person name="Volckaert G."/>
            <person name="Vreken P."/>
            <person name="Wang H."/>
            <person name="Warmington J.R."/>
            <person name="von Wettstein D."/>
            <person name="Wicksteed B.L."/>
            <person name="Wilson C."/>
            <person name="Wurst H."/>
            <person name="Xu G."/>
            <person name="Yoshikawa A."/>
            <person name="Zimmermann F.K."/>
            <person name="Sgouros J.G."/>
        </authorList>
    </citation>
    <scope>NUCLEOTIDE SEQUENCE [LARGE SCALE GENOMIC DNA]</scope>
    <source>
        <strain>ATCC 204508 / S288c</strain>
    </source>
</reference>
<reference key="2">
    <citation type="journal article" date="2014" name="G3 (Bethesda)">
        <title>The reference genome sequence of Saccharomyces cerevisiae: Then and now.</title>
        <authorList>
            <person name="Engel S.R."/>
            <person name="Dietrich F.S."/>
            <person name="Fisk D.G."/>
            <person name="Binkley G."/>
            <person name="Balakrishnan R."/>
            <person name="Costanzo M.C."/>
            <person name="Dwight S.S."/>
            <person name="Hitz B.C."/>
            <person name="Karra K."/>
            <person name="Nash R.S."/>
            <person name="Weng S."/>
            <person name="Wong E.D."/>
            <person name="Lloyd P."/>
            <person name="Skrzypek M.S."/>
            <person name="Miyasato S.R."/>
            <person name="Simison M."/>
            <person name="Cherry J.M."/>
        </authorList>
    </citation>
    <scope>GENOME REANNOTATION</scope>
    <source>
        <strain>ATCC 204508 / S288c</strain>
    </source>
</reference>
<reference key="3">
    <citation type="journal article" date="2003" name="Nature">
        <title>Global analysis of protein localization in budding yeast.</title>
        <authorList>
            <person name="Huh W.-K."/>
            <person name="Falvo J.V."/>
            <person name="Gerke L.C."/>
            <person name="Carroll A.S."/>
            <person name="Howson R.W."/>
            <person name="Weissman J.S."/>
            <person name="O'Shea E.K."/>
        </authorList>
    </citation>
    <scope>SUBCELLULAR LOCATION [LARGE SCALE ANALYSIS]</scope>
</reference>
<reference key="4">
    <citation type="journal article" date="2003" name="Nature">
        <title>Global analysis of protein expression in yeast.</title>
        <authorList>
            <person name="Ghaemmaghami S."/>
            <person name="Huh W.-K."/>
            <person name="Bower K."/>
            <person name="Howson R.W."/>
            <person name="Belle A."/>
            <person name="Dephoure N."/>
            <person name="O'Shea E.K."/>
            <person name="Weissman J.S."/>
        </authorList>
    </citation>
    <scope>LEVEL OF PROTEIN EXPRESSION [LARGE SCALE ANALYSIS]</scope>
</reference>
<reference key="5">
    <citation type="journal article" date="2006" name="Mol. Biol. Cell">
        <title>PER1 is required for GPI-phospholipase A2 activity and involved in lipid remodeling of GPI-anchored proteins.</title>
        <authorList>
            <person name="Fujita M."/>
            <person name="Umemura M."/>
            <person name="Yoko-o T."/>
            <person name="Jigami Y."/>
        </authorList>
    </citation>
    <scope>FUNCTION</scope>
    <scope>SUBCELLULAR LOCATION</scope>
</reference>
<reference key="6">
    <citation type="journal article" date="2006" name="Proc. Natl. Acad. Sci. U.S.A.">
        <title>A global topology map of the Saccharomyces cerevisiae membrane proteome.</title>
        <authorList>
            <person name="Kim H."/>
            <person name="Melen K."/>
            <person name="Oesterberg M."/>
            <person name="von Heijne G."/>
        </authorList>
    </citation>
    <scope>TOPOLOGY [LARGE SCALE ANALYSIS]</scope>
    <source>
        <strain>ATCC 208353 / W303-1A</strain>
    </source>
</reference>
<keyword id="KW-0256">Endoplasmic reticulum</keyword>
<keyword id="KW-0337">GPI-anchor biosynthesis</keyword>
<keyword id="KW-0472">Membrane</keyword>
<keyword id="KW-1185">Reference proteome</keyword>
<keyword id="KW-0732">Signal</keyword>
<keyword id="KW-0812">Transmembrane</keyword>
<keyword id="KW-1133">Transmembrane helix</keyword>
<proteinExistence type="evidence at protein level"/>
<name>PER1_YEAST</name>